<organism>
    <name type="scientific">Campylobacter jejuni subsp. doylei (strain ATCC BAA-1458 / RM4099 / 269.97)</name>
    <dbReference type="NCBI Taxonomy" id="360109"/>
    <lineage>
        <taxon>Bacteria</taxon>
        <taxon>Pseudomonadati</taxon>
        <taxon>Campylobacterota</taxon>
        <taxon>Epsilonproteobacteria</taxon>
        <taxon>Campylobacterales</taxon>
        <taxon>Campylobacteraceae</taxon>
        <taxon>Campylobacter</taxon>
    </lineage>
</organism>
<keyword id="KW-0012">Acyltransferase</keyword>
<keyword id="KW-0963">Cytoplasm</keyword>
<keyword id="KW-0275">Fatty acid biosynthesis</keyword>
<keyword id="KW-0276">Fatty acid metabolism</keyword>
<keyword id="KW-0444">Lipid biosynthesis</keyword>
<keyword id="KW-0443">Lipid metabolism</keyword>
<keyword id="KW-0511">Multifunctional enzyme</keyword>
<keyword id="KW-0808">Transferase</keyword>
<comment type="function">
    <text evidence="1">Catalyzes the condensation reaction of fatty acid synthesis by the addition to an acyl acceptor of two carbons from malonyl-ACP. Catalyzes the first condensation reaction which initiates fatty acid synthesis and may therefore play a role in governing the total rate of fatty acid production. Possesses both acetoacetyl-ACP synthase and acetyl transacylase activities. Its substrate specificity determines the biosynthesis of branched-chain and/or straight-chain of fatty acids.</text>
</comment>
<comment type="catalytic activity">
    <reaction evidence="1">
        <text>malonyl-[ACP] + acetyl-CoA + H(+) = 3-oxobutanoyl-[ACP] + CO2 + CoA</text>
        <dbReference type="Rhea" id="RHEA:12080"/>
        <dbReference type="Rhea" id="RHEA-COMP:9623"/>
        <dbReference type="Rhea" id="RHEA-COMP:9625"/>
        <dbReference type="ChEBI" id="CHEBI:15378"/>
        <dbReference type="ChEBI" id="CHEBI:16526"/>
        <dbReference type="ChEBI" id="CHEBI:57287"/>
        <dbReference type="ChEBI" id="CHEBI:57288"/>
        <dbReference type="ChEBI" id="CHEBI:78449"/>
        <dbReference type="ChEBI" id="CHEBI:78450"/>
        <dbReference type="EC" id="2.3.1.180"/>
    </reaction>
</comment>
<comment type="pathway">
    <text evidence="1">Lipid metabolism; fatty acid biosynthesis.</text>
</comment>
<comment type="subunit">
    <text evidence="1">Homodimer.</text>
</comment>
<comment type="subcellular location">
    <subcellularLocation>
        <location evidence="1">Cytoplasm</location>
    </subcellularLocation>
</comment>
<comment type="domain">
    <text evidence="1">The last Arg residue of the ACP-binding site is essential for the weak association between ACP/AcpP and FabH.</text>
</comment>
<comment type="similarity">
    <text evidence="1">Belongs to the thiolase-like superfamily. FabH family.</text>
</comment>
<name>FABH_CAMJD</name>
<gene>
    <name evidence="1" type="primary">fabH</name>
    <name type="ordered locus">JJD26997_1630</name>
</gene>
<sequence>MLKASLKSIASYIPEKILSNTDLEKMVDTTDEWIARRTGIKERRIANENENTSDLGTKAALKAIERANLKPEDIDAILVATLSPDYFTMPSTACKIASNLGLVNISAFDISAACSGFIYLLEQAKALVESGLKKNVLIIGAEKTSSIMDYSDRSICILFGDGAGAGVVSLDNENYILDVHTASNGNYGDLLMTQRSQKSSLCQTLSMQMKGNEVFKIAVNTLSNDVVEILAKNNILAQEIDLFIPHQANLRIIKAVQEKLNLSDEKCVITVQKYGNTSAASIPMAMNDAYEEGRLKKGNLILLDAFGGGFTWGSALLKFGGENF</sequence>
<reference key="1">
    <citation type="submission" date="2007-07" db="EMBL/GenBank/DDBJ databases">
        <title>Complete genome sequence of Campylobacter jejuni subsp doylei 269.97 isolated from human blood.</title>
        <authorList>
            <person name="Fouts D.E."/>
            <person name="Mongodin E.F."/>
            <person name="Puiu D."/>
            <person name="Sebastian Y."/>
            <person name="Miller W.G."/>
            <person name="Mandrell R.E."/>
            <person name="Lastovica A.J."/>
            <person name="Nelson K.E."/>
        </authorList>
    </citation>
    <scope>NUCLEOTIDE SEQUENCE [LARGE SCALE GENOMIC DNA]</scope>
    <source>
        <strain>ATCC BAA-1458 / RM4099 / 269.97</strain>
    </source>
</reference>
<dbReference type="EC" id="2.3.1.180" evidence="1"/>
<dbReference type="EMBL" id="CP000768">
    <property type="protein sequence ID" value="ABS44499.1"/>
    <property type="molecule type" value="Genomic_DNA"/>
</dbReference>
<dbReference type="SMR" id="A7H541"/>
<dbReference type="KEGG" id="cjd:JJD26997_1630"/>
<dbReference type="HOGENOM" id="CLU_039592_4_0_7"/>
<dbReference type="UniPathway" id="UPA00094"/>
<dbReference type="Proteomes" id="UP000002302">
    <property type="component" value="Chromosome"/>
</dbReference>
<dbReference type="GO" id="GO:0005737">
    <property type="term" value="C:cytoplasm"/>
    <property type="evidence" value="ECO:0007669"/>
    <property type="project" value="UniProtKB-SubCell"/>
</dbReference>
<dbReference type="GO" id="GO:0004315">
    <property type="term" value="F:3-oxoacyl-[acyl-carrier-protein] synthase activity"/>
    <property type="evidence" value="ECO:0007669"/>
    <property type="project" value="InterPro"/>
</dbReference>
<dbReference type="GO" id="GO:0033818">
    <property type="term" value="F:beta-ketoacyl-acyl-carrier-protein synthase III activity"/>
    <property type="evidence" value="ECO:0007669"/>
    <property type="project" value="UniProtKB-UniRule"/>
</dbReference>
<dbReference type="GO" id="GO:0006633">
    <property type="term" value="P:fatty acid biosynthetic process"/>
    <property type="evidence" value="ECO:0007669"/>
    <property type="project" value="UniProtKB-UniRule"/>
</dbReference>
<dbReference type="GO" id="GO:0044550">
    <property type="term" value="P:secondary metabolite biosynthetic process"/>
    <property type="evidence" value="ECO:0007669"/>
    <property type="project" value="TreeGrafter"/>
</dbReference>
<dbReference type="CDD" id="cd00830">
    <property type="entry name" value="KAS_III"/>
    <property type="match status" value="1"/>
</dbReference>
<dbReference type="FunFam" id="3.40.47.10:FF:000004">
    <property type="entry name" value="3-oxoacyl-[acyl-carrier-protein] synthase 3"/>
    <property type="match status" value="1"/>
</dbReference>
<dbReference type="Gene3D" id="3.40.47.10">
    <property type="match status" value="1"/>
</dbReference>
<dbReference type="HAMAP" id="MF_01815">
    <property type="entry name" value="FabH"/>
    <property type="match status" value="1"/>
</dbReference>
<dbReference type="InterPro" id="IPR013747">
    <property type="entry name" value="ACP_syn_III_C"/>
</dbReference>
<dbReference type="InterPro" id="IPR013751">
    <property type="entry name" value="ACP_syn_III_N"/>
</dbReference>
<dbReference type="InterPro" id="IPR004655">
    <property type="entry name" value="FabH"/>
</dbReference>
<dbReference type="InterPro" id="IPR016039">
    <property type="entry name" value="Thiolase-like"/>
</dbReference>
<dbReference type="NCBIfam" id="TIGR00747">
    <property type="entry name" value="fabH"/>
    <property type="match status" value="1"/>
</dbReference>
<dbReference type="NCBIfam" id="NF006829">
    <property type="entry name" value="PRK09352.1"/>
    <property type="match status" value="1"/>
</dbReference>
<dbReference type="PANTHER" id="PTHR34069">
    <property type="entry name" value="3-OXOACYL-[ACYL-CARRIER-PROTEIN] SYNTHASE 3"/>
    <property type="match status" value="1"/>
</dbReference>
<dbReference type="PANTHER" id="PTHR34069:SF2">
    <property type="entry name" value="BETA-KETOACYL-[ACYL-CARRIER-PROTEIN] SYNTHASE III"/>
    <property type="match status" value="1"/>
</dbReference>
<dbReference type="Pfam" id="PF08545">
    <property type="entry name" value="ACP_syn_III"/>
    <property type="match status" value="1"/>
</dbReference>
<dbReference type="Pfam" id="PF08541">
    <property type="entry name" value="ACP_syn_III_C"/>
    <property type="match status" value="1"/>
</dbReference>
<dbReference type="SUPFAM" id="SSF53901">
    <property type="entry name" value="Thiolase-like"/>
    <property type="match status" value="1"/>
</dbReference>
<accession>A7H541</accession>
<feature type="chain" id="PRO_1000056336" description="Beta-ketoacyl-[acyl-carrier-protein] synthase III">
    <location>
        <begin position="1"/>
        <end position="324"/>
    </location>
</feature>
<feature type="region of interest" description="ACP-binding" evidence="1">
    <location>
        <begin position="247"/>
        <end position="251"/>
    </location>
</feature>
<feature type="active site" evidence="1">
    <location>
        <position position="114"/>
    </location>
</feature>
<feature type="active site" evidence="1">
    <location>
        <position position="246"/>
    </location>
</feature>
<feature type="active site" evidence="1">
    <location>
        <position position="276"/>
    </location>
</feature>
<evidence type="ECO:0000255" key="1">
    <source>
        <dbReference type="HAMAP-Rule" id="MF_01815"/>
    </source>
</evidence>
<protein>
    <recommendedName>
        <fullName evidence="1">Beta-ketoacyl-[acyl-carrier-protein] synthase III</fullName>
        <shortName evidence="1">Beta-ketoacyl-ACP synthase III</shortName>
        <shortName evidence="1">KAS III</shortName>
        <ecNumber evidence="1">2.3.1.180</ecNumber>
    </recommendedName>
    <alternativeName>
        <fullName evidence="1">3-oxoacyl-[acyl-carrier-protein] synthase 3</fullName>
    </alternativeName>
    <alternativeName>
        <fullName evidence="1">3-oxoacyl-[acyl-carrier-protein] synthase III</fullName>
    </alternativeName>
</protein>
<proteinExistence type="inferred from homology"/>